<accession>F4JMJ3</accession>
<accession>O23511</accession>
<reference key="1">
    <citation type="journal article" date="1998" name="Nature">
        <title>Analysis of 1.9 Mb of contiguous sequence from chromosome 4 of Arabidopsis thaliana.</title>
        <authorList>
            <person name="Bevan M."/>
            <person name="Bancroft I."/>
            <person name="Bent E."/>
            <person name="Love K."/>
            <person name="Goodman H.M."/>
            <person name="Dean C."/>
            <person name="Bergkamp R."/>
            <person name="Dirkse W."/>
            <person name="van Staveren M."/>
            <person name="Stiekema W."/>
            <person name="Drost L."/>
            <person name="Ridley P."/>
            <person name="Hudson S.-A."/>
            <person name="Patel K."/>
            <person name="Murphy G."/>
            <person name="Piffanelli P."/>
            <person name="Wedler H."/>
            <person name="Wedler E."/>
            <person name="Wambutt R."/>
            <person name="Weitzenegger T."/>
            <person name="Pohl T."/>
            <person name="Terryn N."/>
            <person name="Gielen J."/>
            <person name="Villarroel R."/>
            <person name="De Clercq R."/>
            <person name="van Montagu M."/>
            <person name="Lecharny A."/>
            <person name="Aubourg S."/>
            <person name="Gy I."/>
            <person name="Kreis M."/>
            <person name="Lao N."/>
            <person name="Kavanagh T."/>
            <person name="Hempel S."/>
            <person name="Kotter P."/>
            <person name="Entian K.-D."/>
            <person name="Rieger M."/>
            <person name="Schaefer M."/>
            <person name="Funk B."/>
            <person name="Mueller-Auer S."/>
            <person name="Silvey M."/>
            <person name="James R."/>
            <person name="Monfort A."/>
            <person name="Pons A."/>
            <person name="Puigdomenech P."/>
            <person name="Douka A."/>
            <person name="Voukelatou E."/>
            <person name="Milioni D."/>
            <person name="Hatzopoulos P."/>
            <person name="Piravandi E."/>
            <person name="Obermaier B."/>
            <person name="Hilbert H."/>
            <person name="Duesterhoeft A."/>
            <person name="Moores T."/>
            <person name="Jones J.D.G."/>
            <person name="Eneva T."/>
            <person name="Palme K."/>
            <person name="Benes V."/>
            <person name="Rechmann S."/>
            <person name="Ansorge W."/>
            <person name="Cooke R."/>
            <person name="Berger C."/>
            <person name="Delseny M."/>
            <person name="Voet M."/>
            <person name="Volckaert G."/>
            <person name="Mewes H.-W."/>
            <person name="Klosterman S."/>
            <person name="Schueller C."/>
            <person name="Chalwatzis N."/>
        </authorList>
    </citation>
    <scope>NUCLEOTIDE SEQUENCE [LARGE SCALE GENOMIC DNA]</scope>
    <source>
        <strain>cv. Columbia</strain>
    </source>
</reference>
<reference key="2">
    <citation type="journal article" date="1999" name="Nature">
        <title>Sequence and analysis of chromosome 4 of the plant Arabidopsis thaliana.</title>
        <authorList>
            <person name="Mayer K.F.X."/>
            <person name="Schueller C."/>
            <person name="Wambutt R."/>
            <person name="Murphy G."/>
            <person name="Volckaert G."/>
            <person name="Pohl T."/>
            <person name="Duesterhoeft A."/>
            <person name="Stiekema W."/>
            <person name="Entian K.-D."/>
            <person name="Terryn N."/>
            <person name="Harris B."/>
            <person name="Ansorge W."/>
            <person name="Brandt P."/>
            <person name="Grivell L.A."/>
            <person name="Rieger M."/>
            <person name="Weichselgartner M."/>
            <person name="de Simone V."/>
            <person name="Obermaier B."/>
            <person name="Mache R."/>
            <person name="Mueller M."/>
            <person name="Kreis M."/>
            <person name="Delseny M."/>
            <person name="Puigdomenech P."/>
            <person name="Watson M."/>
            <person name="Schmidtheini T."/>
            <person name="Reichert B."/>
            <person name="Portetelle D."/>
            <person name="Perez-Alonso M."/>
            <person name="Boutry M."/>
            <person name="Bancroft I."/>
            <person name="Vos P."/>
            <person name="Hoheisel J."/>
            <person name="Zimmermann W."/>
            <person name="Wedler H."/>
            <person name="Ridley P."/>
            <person name="Langham S.-A."/>
            <person name="McCullagh B."/>
            <person name="Bilham L."/>
            <person name="Robben J."/>
            <person name="van der Schueren J."/>
            <person name="Grymonprez B."/>
            <person name="Chuang Y.-J."/>
            <person name="Vandenbussche F."/>
            <person name="Braeken M."/>
            <person name="Weltjens I."/>
            <person name="Voet M."/>
            <person name="Bastiaens I."/>
            <person name="Aert R."/>
            <person name="Defoor E."/>
            <person name="Weitzenegger T."/>
            <person name="Bothe G."/>
            <person name="Ramsperger U."/>
            <person name="Hilbert H."/>
            <person name="Braun M."/>
            <person name="Holzer E."/>
            <person name="Brandt A."/>
            <person name="Peters S."/>
            <person name="van Staveren M."/>
            <person name="Dirkse W."/>
            <person name="Mooijman P."/>
            <person name="Klein Lankhorst R."/>
            <person name="Rose M."/>
            <person name="Hauf J."/>
            <person name="Koetter P."/>
            <person name="Berneiser S."/>
            <person name="Hempel S."/>
            <person name="Feldpausch M."/>
            <person name="Lamberth S."/>
            <person name="Van den Daele H."/>
            <person name="De Keyser A."/>
            <person name="Buysshaert C."/>
            <person name="Gielen J."/>
            <person name="Villarroel R."/>
            <person name="De Clercq R."/>
            <person name="van Montagu M."/>
            <person name="Rogers J."/>
            <person name="Cronin A."/>
            <person name="Quail M.A."/>
            <person name="Bray-Allen S."/>
            <person name="Clark L."/>
            <person name="Doggett J."/>
            <person name="Hall S."/>
            <person name="Kay M."/>
            <person name="Lennard N."/>
            <person name="McLay K."/>
            <person name="Mayes R."/>
            <person name="Pettett A."/>
            <person name="Rajandream M.A."/>
            <person name="Lyne M."/>
            <person name="Benes V."/>
            <person name="Rechmann S."/>
            <person name="Borkova D."/>
            <person name="Bloecker H."/>
            <person name="Scharfe M."/>
            <person name="Grimm M."/>
            <person name="Loehnert T.-H."/>
            <person name="Dose S."/>
            <person name="de Haan M."/>
            <person name="Maarse A.C."/>
            <person name="Schaefer M."/>
            <person name="Mueller-Auer S."/>
            <person name="Gabel C."/>
            <person name="Fuchs M."/>
            <person name="Fartmann B."/>
            <person name="Granderath K."/>
            <person name="Dauner D."/>
            <person name="Herzl A."/>
            <person name="Neumann S."/>
            <person name="Argiriou A."/>
            <person name="Vitale D."/>
            <person name="Liguori R."/>
            <person name="Piravandi E."/>
            <person name="Massenet O."/>
            <person name="Quigley F."/>
            <person name="Clabauld G."/>
            <person name="Muendlein A."/>
            <person name="Felber R."/>
            <person name="Schnabl S."/>
            <person name="Hiller R."/>
            <person name="Schmidt W."/>
            <person name="Lecharny A."/>
            <person name="Aubourg S."/>
            <person name="Chefdor F."/>
            <person name="Cooke R."/>
            <person name="Berger C."/>
            <person name="Monfort A."/>
            <person name="Casacuberta E."/>
            <person name="Gibbons T."/>
            <person name="Weber N."/>
            <person name="Vandenbol M."/>
            <person name="Bargues M."/>
            <person name="Terol J."/>
            <person name="Torres A."/>
            <person name="Perez-Perez A."/>
            <person name="Purnelle B."/>
            <person name="Bent E."/>
            <person name="Johnson S."/>
            <person name="Tacon D."/>
            <person name="Jesse T."/>
            <person name="Heijnen L."/>
            <person name="Schwarz S."/>
            <person name="Scholler P."/>
            <person name="Heber S."/>
            <person name="Francs P."/>
            <person name="Bielke C."/>
            <person name="Frishman D."/>
            <person name="Haase D."/>
            <person name="Lemcke K."/>
            <person name="Mewes H.-W."/>
            <person name="Stocker S."/>
            <person name="Zaccaria P."/>
            <person name="Bevan M."/>
            <person name="Wilson R.K."/>
            <person name="de la Bastide M."/>
            <person name="Habermann K."/>
            <person name="Parnell L."/>
            <person name="Dedhia N."/>
            <person name="Gnoj L."/>
            <person name="Schutz K."/>
            <person name="Huang E."/>
            <person name="Spiegel L."/>
            <person name="Sekhon M."/>
            <person name="Murray J."/>
            <person name="Sheet P."/>
            <person name="Cordes M."/>
            <person name="Abu-Threideh J."/>
            <person name="Stoneking T."/>
            <person name="Kalicki J."/>
            <person name="Graves T."/>
            <person name="Harmon G."/>
            <person name="Edwards J."/>
            <person name="Latreille P."/>
            <person name="Courtney L."/>
            <person name="Cloud J."/>
            <person name="Abbott A."/>
            <person name="Scott K."/>
            <person name="Johnson D."/>
            <person name="Minx P."/>
            <person name="Bentley D."/>
            <person name="Fulton B."/>
            <person name="Miller N."/>
            <person name="Greco T."/>
            <person name="Kemp K."/>
            <person name="Kramer J."/>
            <person name="Fulton L."/>
            <person name="Mardis E."/>
            <person name="Dante M."/>
            <person name="Pepin K."/>
            <person name="Hillier L.W."/>
            <person name="Nelson J."/>
            <person name="Spieth J."/>
            <person name="Ryan E."/>
            <person name="Andrews S."/>
            <person name="Geisel C."/>
            <person name="Layman D."/>
            <person name="Du H."/>
            <person name="Ali J."/>
            <person name="Berghoff A."/>
            <person name="Jones K."/>
            <person name="Drone K."/>
            <person name="Cotton M."/>
            <person name="Joshu C."/>
            <person name="Antonoiu B."/>
            <person name="Zidanic M."/>
            <person name="Strong C."/>
            <person name="Sun H."/>
            <person name="Lamar B."/>
            <person name="Yordan C."/>
            <person name="Ma P."/>
            <person name="Zhong J."/>
            <person name="Preston R."/>
            <person name="Vil D."/>
            <person name="Shekher M."/>
            <person name="Matero A."/>
            <person name="Shah R."/>
            <person name="Swaby I.K."/>
            <person name="O'Shaughnessy A."/>
            <person name="Rodriguez M."/>
            <person name="Hoffman J."/>
            <person name="Till S."/>
            <person name="Granat S."/>
            <person name="Shohdy N."/>
            <person name="Hasegawa A."/>
            <person name="Hameed A."/>
            <person name="Lodhi M."/>
            <person name="Johnson A."/>
            <person name="Chen E."/>
            <person name="Marra M.A."/>
            <person name="Martienssen R."/>
            <person name="McCombie W.R."/>
        </authorList>
    </citation>
    <scope>NUCLEOTIDE SEQUENCE [LARGE SCALE GENOMIC DNA]</scope>
    <source>
        <strain>cv. Columbia</strain>
    </source>
</reference>
<reference key="3">
    <citation type="journal article" date="2017" name="Plant J.">
        <title>Araport11: a complete reannotation of the Arabidopsis thaliana reference genome.</title>
        <authorList>
            <person name="Cheng C.Y."/>
            <person name="Krishnakumar V."/>
            <person name="Chan A.P."/>
            <person name="Thibaud-Nissen F."/>
            <person name="Schobel S."/>
            <person name="Town C.D."/>
        </authorList>
    </citation>
    <scope>GENOME REANNOTATION</scope>
    <source>
        <strain>cv. Columbia</strain>
    </source>
</reference>
<reference key="4">
    <citation type="journal article" date="2006" name="Proc. Natl. Acad. Sci. U.S.A.">
        <title>Defective RNA processing enhances RNA silencing and influences flowering of Arabidopsis.</title>
        <authorList>
            <person name="Herr A.J."/>
            <person name="Molnar A."/>
            <person name="Jones A."/>
            <person name="Baulcombe D.C."/>
        </authorList>
    </citation>
    <scope>IDENTIFICATION</scope>
    <scope>TISSUE SPECIFICITY</scope>
</reference>
<reference key="5">
    <citation type="journal article" date="2013" name="PLoS ONE">
        <title>Genome-wide comparative in silico analysis of the RNA helicase gene family in Zea mays and Glycine max: a comparison with Arabidopsis and Oryza sativa.</title>
        <authorList>
            <person name="Xu R."/>
            <person name="Zhang S."/>
            <person name="Huang J."/>
            <person name="Zheng C."/>
        </authorList>
    </citation>
    <scope>GENE FAMILY</scope>
</reference>
<keyword id="KW-0067">ATP-binding</keyword>
<keyword id="KW-0347">Helicase</keyword>
<keyword id="KW-0378">Hydrolase</keyword>
<keyword id="KW-0507">mRNA processing</keyword>
<keyword id="KW-0508">mRNA splicing</keyword>
<keyword id="KW-0547">Nucleotide-binding</keyword>
<keyword id="KW-1185">Reference proteome</keyword>
<keyword id="KW-0747">Spliceosome</keyword>
<comment type="function">
    <text evidence="6">May be involved in pre-mRNA splicing.</text>
</comment>
<comment type="catalytic activity">
    <reaction>
        <text>ATP + H2O = ADP + phosphate + H(+)</text>
        <dbReference type="Rhea" id="RHEA:13065"/>
        <dbReference type="ChEBI" id="CHEBI:15377"/>
        <dbReference type="ChEBI" id="CHEBI:15378"/>
        <dbReference type="ChEBI" id="CHEBI:30616"/>
        <dbReference type="ChEBI" id="CHEBI:43474"/>
        <dbReference type="ChEBI" id="CHEBI:456216"/>
        <dbReference type="EC" id="3.6.4.13"/>
    </reaction>
</comment>
<comment type="tissue specificity">
    <text evidence="4">Predominantly expressed in flowers.</text>
</comment>
<comment type="similarity">
    <text evidence="6">Belongs to the DEAD box helicase family. DEAH subfamily. PRP2 sub-subfamily.</text>
</comment>
<comment type="sequence caution" evidence="6">
    <conflict type="erroneous gene model prediction">
        <sequence resource="EMBL-CDS" id="AEE83783"/>
    </conflict>
</comment>
<dbReference type="EC" id="3.6.4.13"/>
<dbReference type="EMBL" id="Z97341">
    <property type="protein sequence ID" value="CAB10443.1"/>
    <property type="molecule type" value="Genomic_DNA"/>
</dbReference>
<dbReference type="EMBL" id="AL161544">
    <property type="protein sequence ID" value="CAB78710.1"/>
    <property type="molecule type" value="Genomic_DNA"/>
</dbReference>
<dbReference type="EMBL" id="CP002687">
    <property type="protein sequence ID" value="AEE83783.1"/>
    <property type="status" value="ALT_SEQ"/>
    <property type="molecule type" value="Genomic_DNA"/>
</dbReference>
<dbReference type="PIR" id="A71434">
    <property type="entry name" value="A71434"/>
</dbReference>
<dbReference type="RefSeq" id="NP_193401.2">
    <property type="nucleotide sequence ID" value="NM_117769.3"/>
</dbReference>
<dbReference type="SMR" id="F4JMJ3"/>
<dbReference type="STRING" id="3702.F4JMJ3"/>
<dbReference type="PaxDb" id="3702-AT4G16680.1"/>
<dbReference type="ProteomicsDB" id="224221"/>
<dbReference type="GeneID" id="827370"/>
<dbReference type="KEGG" id="ath:AT4G16680"/>
<dbReference type="Araport" id="AT4G16680"/>
<dbReference type="TAIR" id="AT4G16680"/>
<dbReference type="eggNOG" id="KOG0923">
    <property type="taxonomic scope" value="Eukaryota"/>
</dbReference>
<dbReference type="HOGENOM" id="CLU_001832_7_1_1"/>
<dbReference type="InParanoid" id="F4JMJ3"/>
<dbReference type="PhylomeDB" id="F4JMJ3"/>
<dbReference type="PRO" id="PR:F4JMJ3"/>
<dbReference type="Proteomes" id="UP000006548">
    <property type="component" value="Chromosome 4"/>
</dbReference>
<dbReference type="ExpressionAtlas" id="F4JMJ3">
    <property type="expression patterns" value="baseline and differential"/>
</dbReference>
<dbReference type="GO" id="GO:0005681">
    <property type="term" value="C:spliceosomal complex"/>
    <property type="evidence" value="ECO:0007669"/>
    <property type="project" value="UniProtKB-KW"/>
</dbReference>
<dbReference type="GO" id="GO:0005524">
    <property type="term" value="F:ATP binding"/>
    <property type="evidence" value="ECO:0007669"/>
    <property type="project" value="UniProtKB-KW"/>
</dbReference>
<dbReference type="GO" id="GO:0016887">
    <property type="term" value="F:ATP hydrolysis activity"/>
    <property type="evidence" value="ECO:0007669"/>
    <property type="project" value="RHEA"/>
</dbReference>
<dbReference type="GO" id="GO:0004386">
    <property type="term" value="F:helicase activity"/>
    <property type="evidence" value="ECO:0000318"/>
    <property type="project" value="GO_Central"/>
</dbReference>
<dbReference type="GO" id="GO:0003723">
    <property type="term" value="F:RNA binding"/>
    <property type="evidence" value="ECO:0000318"/>
    <property type="project" value="GO_Central"/>
</dbReference>
<dbReference type="GO" id="GO:0003724">
    <property type="term" value="F:RNA helicase activity"/>
    <property type="evidence" value="ECO:0007669"/>
    <property type="project" value="UniProtKB-EC"/>
</dbReference>
<dbReference type="GO" id="GO:0006397">
    <property type="term" value="P:mRNA processing"/>
    <property type="evidence" value="ECO:0007669"/>
    <property type="project" value="UniProtKB-KW"/>
</dbReference>
<dbReference type="GO" id="GO:0008380">
    <property type="term" value="P:RNA splicing"/>
    <property type="evidence" value="ECO:0007669"/>
    <property type="project" value="UniProtKB-KW"/>
</dbReference>
<dbReference type="CDD" id="cd18791">
    <property type="entry name" value="SF2_C_RHA"/>
    <property type="match status" value="1"/>
</dbReference>
<dbReference type="FunFam" id="1.20.120.1080:FF:000001">
    <property type="entry name" value="Pre-mRNA-splicing factor ATP-dependent RNA helicase"/>
    <property type="match status" value="1"/>
</dbReference>
<dbReference type="FunFam" id="3.40.50.300:FF:000007">
    <property type="entry name" value="Pre-mRNA-splicing factor ATP-dependent RNA helicase"/>
    <property type="match status" value="1"/>
</dbReference>
<dbReference type="FunFam" id="3.40.50.300:FF:003754">
    <property type="entry name" value="Probable pre-mRNA-splicing factor ATP-dependent RNA helicase DEAH8"/>
    <property type="match status" value="1"/>
</dbReference>
<dbReference type="Gene3D" id="1.20.120.1080">
    <property type="match status" value="1"/>
</dbReference>
<dbReference type="Gene3D" id="3.40.50.300">
    <property type="entry name" value="P-loop containing nucleotide triphosphate hydrolases"/>
    <property type="match status" value="2"/>
</dbReference>
<dbReference type="InterPro" id="IPR011709">
    <property type="entry name" value="DEAD-box_helicase_OB_fold"/>
</dbReference>
<dbReference type="InterPro" id="IPR011545">
    <property type="entry name" value="DEAD/DEAH_box_helicase_dom"/>
</dbReference>
<dbReference type="InterPro" id="IPR002464">
    <property type="entry name" value="DNA/RNA_helicase_DEAH_CS"/>
</dbReference>
<dbReference type="InterPro" id="IPR048333">
    <property type="entry name" value="HA2_WH"/>
</dbReference>
<dbReference type="InterPro" id="IPR007502">
    <property type="entry name" value="Helicase-assoc_dom"/>
</dbReference>
<dbReference type="InterPro" id="IPR014001">
    <property type="entry name" value="Helicase_ATP-bd"/>
</dbReference>
<dbReference type="InterPro" id="IPR001650">
    <property type="entry name" value="Helicase_C-like"/>
</dbReference>
<dbReference type="InterPro" id="IPR027417">
    <property type="entry name" value="P-loop_NTPase"/>
</dbReference>
<dbReference type="PANTHER" id="PTHR18934">
    <property type="entry name" value="ATP-DEPENDENT RNA HELICASE"/>
    <property type="match status" value="1"/>
</dbReference>
<dbReference type="PANTHER" id="PTHR18934:SF222">
    <property type="entry name" value="PRE-MRNA-SPLICING FACTOR ATP-DEPENDENT RNA HELICASE DEAH8-RELATED"/>
    <property type="match status" value="1"/>
</dbReference>
<dbReference type="Pfam" id="PF00270">
    <property type="entry name" value="DEAD"/>
    <property type="match status" value="1"/>
</dbReference>
<dbReference type="Pfam" id="PF21010">
    <property type="entry name" value="HA2_C"/>
    <property type="match status" value="1"/>
</dbReference>
<dbReference type="Pfam" id="PF04408">
    <property type="entry name" value="HA2_N"/>
    <property type="match status" value="1"/>
</dbReference>
<dbReference type="Pfam" id="PF00271">
    <property type="entry name" value="Helicase_C"/>
    <property type="match status" value="1"/>
</dbReference>
<dbReference type="Pfam" id="PF07717">
    <property type="entry name" value="OB_NTP_bind"/>
    <property type="match status" value="1"/>
</dbReference>
<dbReference type="SMART" id="SM00487">
    <property type="entry name" value="DEXDc"/>
    <property type="match status" value="1"/>
</dbReference>
<dbReference type="SMART" id="SM00847">
    <property type="entry name" value="HA2"/>
    <property type="match status" value="1"/>
</dbReference>
<dbReference type="SMART" id="SM00490">
    <property type="entry name" value="HELICc"/>
    <property type="match status" value="1"/>
</dbReference>
<dbReference type="SUPFAM" id="SSF52540">
    <property type="entry name" value="P-loop containing nucleoside triphosphate hydrolases"/>
    <property type="match status" value="1"/>
</dbReference>
<dbReference type="PROSITE" id="PS00690">
    <property type="entry name" value="DEAH_ATP_HELICASE"/>
    <property type="match status" value="1"/>
</dbReference>
<dbReference type="PROSITE" id="PS51192">
    <property type="entry name" value="HELICASE_ATP_BIND_1"/>
    <property type="match status" value="1"/>
</dbReference>
<dbReference type="PROSITE" id="PS51194">
    <property type="entry name" value="HELICASE_CTER"/>
    <property type="match status" value="1"/>
</dbReference>
<organism>
    <name type="scientific">Arabidopsis thaliana</name>
    <name type="common">Mouse-ear cress</name>
    <dbReference type="NCBI Taxonomy" id="3702"/>
    <lineage>
        <taxon>Eukaryota</taxon>
        <taxon>Viridiplantae</taxon>
        <taxon>Streptophyta</taxon>
        <taxon>Embryophyta</taxon>
        <taxon>Tracheophyta</taxon>
        <taxon>Spermatophyta</taxon>
        <taxon>Magnoliopsida</taxon>
        <taxon>eudicotyledons</taxon>
        <taxon>Gunneridae</taxon>
        <taxon>Pentapetalae</taxon>
        <taxon>rosids</taxon>
        <taxon>malvids</taxon>
        <taxon>Brassicales</taxon>
        <taxon>Brassicaceae</taxon>
        <taxon>Camelineae</taxon>
        <taxon>Arabidopsis</taxon>
    </lineage>
</organism>
<gene>
    <name evidence="7" type="ordered locus">At4g16680</name>
    <name evidence="8" type="ORF">dl4365c</name>
    <name evidence="9" type="ORF">FCAALL.3</name>
</gene>
<feature type="chain" id="PRO_0000434936" description="Probable pre-mRNA-splicing factor ATP-dependent RNA helicase DEAH8">
    <location>
        <begin position="1"/>
        <end position="883"/>
    </location>
</feature>
<feature type="domain" description="Helicase ATP-binding" evidence="1">
    <location>
        <begin position="232"/>
        <end position="395"/>
    </location>
</feature>
<feature type="domain" description="Helicase C-terminal" evidence="2">
    <location>
        <begin position="416"/>
        <end position="589"/>
    </location>
</feature>
<feature type="region of interest" description="Disordered" evidence="3">
    <location>
        <begin position="845"/>
        <end position="883"/>
    </location>
</feature>
<feature type="short sequence motif" description="DEAH box" evidence="1">
    <location>
        <begin position="342"/>
        <end position="345"/>
    </location>
</feature>
<feature type="binding site" evidence="1">
    <location>
        <begin position="245"/>
        <end position="252"/>
    </location>
    <ligand>
        <name>ATP</name>
        <dbReference type="ChEBI" id="CHEBI:30616"/>
    </ligand>
</feature>
<proteinExistence type="evidence at transcript level"/>
<name>DEAH8_ARATH</name>
<protein>
    <recommendedName>
        <fullName evidence="6">Probable pre-mRNA-splicing factor ATP-dependent RNA helicase DEAH8</fullName>
        <ecNumber>3.6.4.13</ecNumber>
    </recommendedName>
    <alternativeName>
        <fullName evidence="5">DEAH RNA helicase homolog PRP2</fullName>
    </alternativeName>
</protein>
<evidence type="ECO:0000255" key="1">
    <source>
        <dbReference type="PROSITE-ProRule" id="PRU00541"/>
    </source>
</evidence>
<evidence type="ECO:0000255" key="2">
    <source>
        <dbReference type="PROSITE-ProRule" id="PRU00542"/>
    </source>
</evidence>
<evidence type="ECO:0000256" key="3">
    <source>
        <dbReference type="SAM" id="MobiDB-lite"/>
    </source>
</evidence>
<evidence type="ECO:0000269" key="4">
    <source>
    </source>
</evidence>
<evidence type="ECO:0000303" key="5">
    <source>
    </source>
</evidence>
<evidence type="ECO:0000305" key="6"/>
<evidence type="ECO:0000312" key="7">
    <source>
        <dbReference type="Araport" id="AT4G16680"/>
    </source>
</evidence>
<evidence type="ECO:0000312" key="8">
    <source>
        <dbReference type="EMBL" id="CAB10443.1"/>
    </source>
</evidence>
<evidence type="ECO:0000312" key="9">
    <source>
        <dbReference type="EMBL" id="CAB78710.1"/>
    </source>
</evidence>
<sequence>METNVPEKKILGFPEEMNSTIQFLSVEKTTCRLPVSIKFNIPKKISTKRRRISVEEEEEEEDENKTKLSSWEKVLSSDEILRLREVSRRKYLTDRENKKVEELRDERKDDDDVEGYRFPDAYDQEGCIDQKKRFDVAKERYCERRRSGRVVTEQEAWEDHQAQKARVRFGAKDKKQVVDGYEFVFDDLTGFVEESSEAETGKHRGCYSKTAAEKAREGREFLPIHGYREELLKLIEENQVLVIVGETGSGKTTQIPQYLQEAGYTKRGKIGCTQPRRVAAMSVASRVAQEVGVKLGHEVGYSIRFEDCTSEKTVIKYMTDGMLLRELLIEPKLDSYSVIIIDEAHERTLSTDILFALVKDVAKVRPDLRLIISSATLEAKKFSEYFDSARIYLIPGRRYPVEKLFRKCPEPDYLETVIRTVVQIHQTEAIGDILVFLTGQEEIETVETNLKRRMMDLGTKGSEIIICPIYSNLPTPLQAKVFEPAPKGTRKVVLATNIAETSLTIDGVKYVIDPGYCKINSYNPRTGMESLLVTPISKASAAQRAGRSGRTGPGKCFRLYNIKDLEPTTIPEIQRANLASVVLTLKSLGIQDVFNFDFMDPPPENALLKALELLYALGALDEIGEITKVGERMVEFPVDPMLSKMIVGSEKYKCSKEIITIAAMLSVGNSVFYRPKNQQVFADKARMDFYEDTENVGDHIALLRVYNSWKEENYSTQWCCEKFIQSKSMKRARDIRDQLLGLLNKIGVELTSNPNDLDAIKKAILAGFFPHSAKLQKNGSYRRVKEPQTVYVHPNSGLFGASPSKWLVYHELVLTTKEYMRHTTEMKPEWLIEIAPHYYKLKDIEDTRPKKTQRRIEEASTSKVDTNKKTRTSKVDTNKKSKR</sequence>